<comment type="function">
    <text evidence="4 5">NADP-dependent dehydrogenase with broad substrate specificity acting on 3-hydroxy acids. Catalyzes the NADP-dependent oxidation of L-allo-threonine to L-2-amino-3-keto-butyrate, which is spontaneously decarboxylated into aminoacetone. Also acts on D-threonine, L-serine, D-serine, D-3-hydroxyisobutyrate, L-3-hydroxyisobutyrate, D-glycerate and L-glycerate (PubMed:12535615). Able to catalyze the reduction of the malonic semialdehyde to 3-hydroxypropionic acid. YdfG is apparently supplementing RutE, the presumed malonic semialdehyde reductase involved in pyrimidine degradation since both are able to detoxify malonic semialdehyde (PubMed:20400551).</text>
</comment>
<comment type="catalytic activity">
    <reaction evidence="5">
        <text>3-hydroxypropanoate + NADP(+) = 3-oxopropanoate + NADPH + H(+)</text>
        <dbReference type="Rhea" id="RHEA:26438"/>
        <dbReference type="ChEBI" id="CHEBI:15378"/>
        <dbReference type="ChEBI" id="CHEBI:16510"/>
        <dbReference type="ChEBI" id="CHEBI:33190"/>
        <dbReference type="ChEBI" id="CHEBI:57783"/>
        <dbReference type="ChEBI" id="CHEBI:58349"/>
        <dbReference type="EC" id="1.1.1.298"/>
    </reaction>
</comment>
<comment type="catalytic activity">
    <reaction evidence="4">
        <text>L-allo-threonine + NADP(+) = aminoacetone + CO2 + NADPH</text>
        <dbReference type="Rhea" id="RHEA:43524"/>
        <dbReference type="ChEBI" id="CHEBI:16526"/>
        <dbReference type="ChEBI" id="CHEBI:57783"/>
        <dbReference type="ChEBI" id="CHEBI:58320"/>
        <dbReference type="ChEBI" id="CHEBI:58349"/>
        <dbReference type="ChEBI" id="CHEBI:58585"/>
        <dbReference type="EC" id="1.1.1.381"/>
    </reaction>
</comment>
<comment type="biophysicochemical properties">
    <kinetics>
        <KM evidence="4">0.54 mM for NADP(+) (at pH 9 and at 30 degrees Celsius)</KM>
        <KM evidence="4">40 mM for L-serine (at pH 9 and at 30 degrees Celsius)</KM>
        <KM evidence="4">69 mM for D-serine (at pH 9 and at 30 degrees Celsius)</KM>
        <KM evidence="4">60 mM for D-threonine (at pH 9 and at 30 degrees Celsius)</KM>
        <KM evidence="4">29 mM for L-allo-threonine (at pH 9 and at 30 degrees Celsius)</KM>
        <KM evidence="4">33 mM for L-glycerate (at pH 9 and at 30 degrees Celsius)</KM>
        <KM evidence="4">50 mM for D-glycerate (at pH 9 and at 30 degrees Celsius)</KM>
        <KM evidence="4">60 mM for L-3-hydroxyisobutyrate (at pH 9 and at 30 degrees Celsius)</KM>
        <KM evidence="4">61 mM for D-3-hydroxyisobutyrate (at pH 9 and at 30 degrees Celsius)</KM>
        <text evidence="4">The highest catalytic efficiency was observed with L-allo-threonine.</text>
    </kinetics>
    <phDependence>
        <text evidence="4">Optimum pH is about 8.5 for the oxidation of L-serine. Stable from pH 6.5 to 10.0.</text>
    </phDependence>
    <temperatureDependence>
        <text evidence="4">Still active after heating at 55 degrees Celsius for 80 minutes.</text>
    </temperatureDependence>
</comment>
<comment type="subunit">
    <text evidence="4">Homotetramer.</text>
</comment>
<comment type="disruption phenotype">
    <text evidence="5">Cells lacking this gene grow poorly on pyrimidine nucleosides and bases as the sole source of nitrogen at room temperature indicating a probably accumulation of a toxic intermediate, the malonic semialdehyde.</text>
</comment>
<comment type="miscellaneous">
    <text>L-threonine, D-allo-threonine, DL-threo-3-phenyl-serine, malonate, DL-malate, citrate, isocitrate, DL-lactate, DL-tartrate, gluconate, glycerol and glycolate are inert as substrates.</text>
</comment>
<comment type="similarity">
    <text evidence="8">Belongs to the short-chain dehydrogenases/reductases (SDR) family.</text>
</comment>
<comment type="sequence caution" evidence="8">
    <conflict type="frameshift">
        <sequence resource="EMBL" id="X57947"/>
    </conflict>
</comment>
<dbReference type="EC" id="1.1.1.381" evidence="4"/>
<dbReference type="EC" id="1.1.1.298" evidence="9"/>
<dbReference type="EMBL" id="U00096">
    <property type="protein sequence ID" value="AAC74612.1"/>
    <property type="molecule type" value="Genomic_DNA"/>
</dbReference>
<dbReference type="EMBL" id="AP009048">
    <property type="protein sequence ID" value="BAA15241.1"/>
    <property type="molecule type" value="Genomic_DNA"/>
</dbReference>
<dbReference type="EMBL" id="X57947">
    <property type="status" value="NOT_ANNOTATED_CDS"/>
    <property type="molecule type" value="Genomic_DNA"/>
</dbReference>
<dbReference type="PIR" id="F64908">
    <property type="entry name" value="F64908"/>
</dbReference>
<dbReference type="RefSeq" id="NP_416057.1">
    <property type="nucleotide sequence ID" value="NC_000913.3"/>
</dbReference>
<dbReference type="RefSeq" id="WP_000636571.1">
    <property type="nucleotide sequence ID" value="NZ_STEB01000003.1"/>
</dbReference>
<dbReference type="SMR" id="P39831"/>
<dbReference type="BioGRID" id="4261740">
    <property type="interactions" value="35"/>
</dbReference>
<dbReference type="BioGRID" id="850445">
    <property type="interactions" value="1"/>
</dbReference>
<dbReference type="DIP" id="DIP-11696N"/>
<dbReference type="FunCoup" id="P39831">
    <property type="interactions" value="639"/>
</dbReference>
<dbReference type="IntAct" id="P39831">
    <property type="interactions" value="13"/>
</dbReference>
<dbReference type="STRING" id="511145.b1539"/>
<dbReference type="jPOST" id="P39831"/>
<dbReference type="PaxDb" id="511145-b1539"/>
<dbReference type="EnsemblBacteria" id="AAC74612">
    <property type="protein sequence ID" value="AAC74612"/>
    <property type="gene ID" value="b1539"/>
</dbReference>
<dbReference type="GeneID" id="93775703"/>
<dbReference type="GeneID" id="946085"/>
<dbReference type="KEGG" id="ecj:JW1532"/>
<dbReference type="KEGG" id="eco:b1539"/>
<dbReference type="KEGG" id="ecoc:C3026_08890"/>
<dbReference type="PATRIC" id="fig|1411691.4.peg.726"/>
<dbReference type="EchoBASE" id="EB2249"/>
<dbReference type="eggNOG" id="COG4221">
    <property type="taxonomic scope" value="Bacteria"/>
</dbReference>
<dbReference type="HOGENOM" id="CLU_010194_2_10_6"/>
<dbReference type="InParanoid" id="P39831"/>
<dbReference type="OMA" id="WRWMWET"/>
<dbReference type="OrthoDB" id="9810734at2"/>
<dbReference type="PhylomeDB" id="P39831"/>
<dbReference type="BioCyc" id="EcoCyc:EG12345-MONOMER"/>
<dbReference type="BioCyc" id="MetaCyc:EG12345-MONOMER"/>
<dbReference type="BRENDA" id="1.1.1.381">
    <property type="organism ID" value="2026"/>
</dbReference>
<dbReference type="PRO" id="PR:P39831"/>
<dbReference type="Proteomes" id="UP000000625">
    <property type="component" value="Chromosome"/>
</dbReference>
<dbReference type="GO" id="GO:0005829">
    <property type="term" value="C:cytosol"/>
    <property type="evidence" value="ECO:0000314"/>
    <property type="project" value="EcoCyc"/>
</dbReference>
<dbReference type="GO" id="GO:0032991">
    <property type="term" value="C:protein-containing complex"/>
    <property type="evidence" value="ECO:0000314"/>
    <property type="project" value="EcoCyc"/>
</dbReference>
<dbReference type="GO" id="GO:0008442">
    <property type="term" value="F:3-hydroxyisobutyrate dehydrogenase activity"/>
    <property type="evidence" value="ECO:0000314"/>
    <property type="project" value="EcoCyc"/>
</dbReference>
<dbReference type="GO" id="GO:0035527">
    <property type="term" value="F:3-hydroxypropionate dehydrogenase (NADP+) activity"/>
    <property type="evidence" value="ECO:0000314"/>
    <property type="project" value="EcoCyc"/>
</dbReference>
<dbReference type="GO" id="GO:0042802">
    <property type="term" value="F:identical protein binding"/>
    <property type="evidence" value="ECO:0000314"/>
    <property type="project" value="EcoCyc"/>
</dbReference>
<dbReference type="GO" id="GO:0031132">
    <property type="term" value="F:serine 3-dehydrogenase activity"/>
    <property type="evidence" value="ECO:0000314"/>
    <property type="project" value="EcoCyc"/>
</dbReference>
<dbReference type="GO" id="GO:0051289">
    <property type="term" value="P:protein homotetramerization"/>
    <property type="evidence" value="ECO:0000314"/>
    <property type="project" value="EcoCyc"/>
</dbReference>
<dbReference type="GO" id="GO:0006212">
    <property type="term" value="P:uracil catabolic process"/>
    <property type="evidence" value="ECO:0000314"/>
    <property type="project" value="UniProtKB"/>
</dbReference>
<dbReference type="CDD" id="cd05346">
    <property type="entry name" value="SDR_c5"/>
    <property type="match status" value="1"/>
</dbReference>
<dbReference type="FunFam" id="3.40.50.720:FF:000047">
    <property type="entry name" value="NADP-dependent L-serine/L-allo-threonine dehydrogenase"/>
    <property type="match status" value="1"/>
</dbReference>
<dbReference type="Gene3D" id="3.40.50.720">
    <property type="entry name" value="NAD(P)-binding Rossmann-like Domain"/>
    <property type="match status" value="1"/>
</dbReference>
<dbReference type="InterPro" id="IPR036291">
    <property type="entry name" value="NAD(P)-bd_dom_sf"/>
</dbReference>
<dbReference type="InterPro" id="IPR020904">
    <property type="entry name" value="Sc_DH/Rdtase_CS"/>
</dbReference>
<dbReference type="InterPro" id="IPR002347">
    <property type="entry name" value="SDR_fam"/>
</dbReference>
<dbReference type="NCBIfam" id="NF007829">
    <property type="entry name" value="PRK10538.1"/>
    <property type="match status" value="1"/>
</dbReference>
<dbReference type="PANTHER" id="PTHR43086:SF3">
    <property type="entry name" value="NADP-DEPENDENT 3-HYDROXY ACID DEHYDROGENASE YDFG"/>
    <property type="match status" value="1"/>
</dbReference>
<dbReference type="PANTHER" id="PTHR43086">
    <property type="entry name" value="VERY-LONG-CHAIN 3-OXOOACYL-COA REDUCTASE"/>
    <property type="match status" value="1"/>
</dbReference>
<dbReference type="Pfam" id="PF00106">
    <property type="entry name" value="adh_short"/>
    <property type="match status" value="1"/>
</dbReference>
<dbReference type="PRINTS" id="PR00081">
    <property type="entry name" value="GDHRDH"/>
</dbReference>
<dbReference type="PRINTS" id="PR00080">
    <property type="entry name" value="SDRFAMILY"/>
</dbReference>
<dbReference type="SUPFAM" id="SSF51735">
    <property type="entry name" value="NAD(P)-binding Rossmann-fold domains"/>
    <property type="match status" value="1"/>
</dbReference>
<dbReference type="PROSITE" id="PS00061">
    <property type="entry name" value="ADH_SHORT"/>
    <property type="match status" value="1"/>
</dbReference>
<reference key="1">
    <citation type="journal article" date="1996" name="DNA Res.">
        <title>A 570-kb DNA sequence of the Escherichia coli K-12 genome corresponding to the 28.0-40.1 min region on the linkage map.</title>
        <authorList>
            <person name="Aiba H."/>
            <person name="Baba T."/>
            <person name="Fujita K."/>
            <person name="Hayashi K."/>
            <person name="Inada T."/>
            <person name="Isono K."/>
            <person name="Itoh T."/>
            <person name="Kasai H."/>
            <person name="Kashimoto K."/>
            <person name="Kimura S."/>
            <person name="Kitakawa M."/>
            <person name="Kitagawa M."/>
            <person name="Makino K."/>
            <person name="Miki T."/>
            <person name="Mizobuchi K."/>
            <person name="Mori H."/>
            <person name="Mori T."/>
            <person name="Motomura K."/>
            <person name="Nakade S."/>
            <person name="Nakamura Y."/>
            <person name="Nashimoto H."/>
            <person name="Nishio Y."/>
            <person name="Oshima T."/>
            <person name="Saito N."/>
            <person name="Sampei G."/>
            <person name="Seki Y."/>
            <person name="Sivasundaram S."/>
            <person name="Tagami H."/>
            <person name="Takeda J."/>
            <person name="Takemoto K."/>
            <person name="Takeuchi Y."/>
            <person name="Wada C."/>
            <person name="Yamamoto Y."/>
            <person name="Horiuchi T."/>
        </authorList>
    </citation>
    <scope>NUCLEOTIDE SEQUENCE [LARGE SCALE GENOMIC DNA]</scope>
    <source>
        <strain>K12 / W3110 / ATCC 27325 / DSM 5911</strain>
    </source>
</reference>
<reference key="2">
    <citation type="journal article" date="1997" name="Science">
        <title>The complete genome sequence of Escherichia coli K-12.</title>
        <authorList>
            <person name="Blattner F.R."/>
            <person name="Plunkett G. III"/>
            <person name="Bloch C.A."/>
            <person name="Perna N.T."/>
            <person name="Burland V."/>
            <person name="Riley M."/>
            <person name="Collado-Vides J."/>
            <person name="Glasner J.D."/>
            <person name="Rode C.K."/>
            <person name="Mayhew G.F."/>
            <person name="Gregor J."/>
            <person name="Davis N.W."/>
            <person name="Kirkpatrick H.A."/>
            <person name="Goeden M.A."/>
            <person name="Rose D.J."/>
            <person name="Mau B."/>
            <person name="Shao Y."/>
        </authorList>
    </citation>
    <scope>NUCLEOTIDE SEQUENCE [LARGE SCALE GENOMIC DNA]</scope>
    <source>
        <strain>K12 / MG1655 / ATCC 47076</strain>
    </source>
</reference>
<reference key="3">
    <citation type="journal article" date="2006" name="Mol. Syst. Biol.">
        <title>Highly accurate genome sequences of Escherichia coli K-12 strains MG1655 and W3110.</title>
        <authorList>
            <person name="Hayashi K."/>
            <person name="Morooka N."/>
            <person name="Yamamoto Y."/>
            <person name="Fujita K."/>
            <person name="Isono K."/>
            <person name="Choi S."/>
            <person name="Ohtsubo E."/>
            <person name="Baba T."/>
            <person name="Wanner B.L."/>
            <person name="Mori H."/>
            <person name="Horiuchi T."/>
        </authorList>
    </citation>
    <scope>NUCLEOTIDE SEQUENCE [LARGE SCALE GENOMIC DNA]</scope>
    <source>
        <strain>K12 / W3110 / ATCC 27325 / DSM 5911</strain>
    </source>
</reference>
<reference key="4">
    <citation type="journal article" date="1993" name="J. Bacteriol.">
        <title>dcp gene of Escherichia coli: cloning, sequencing, transcript mapping, and characterization of the gene product.</title>
        <authorList>
            <person name="Henrich B."/>
            <person name="Becker S."/>
            <person name="Schroeder U."/>
            <person name="Plapp R."/>
        </authorList>
    </citation>
    <scope>NUCLEOTIDE SEQUENCE [GENOMIC DNA] OF 1-182</scope>
    <source>
        <strain>K12</strain>
    </source>
</reference>
<reference key="5">
    <citation type="journal article" date="1994" name="Nucleic Acids Res.">
        <title>Intrinsic and extrinsic approaches for detecting genes in a bacterial genome.</title>
        <authorList>
            <person name="Borodovsky M."/>
            <person name="Rudd K.E."/>
            <person name="Koonin E.V."/>
        </authorList>
    </citation>
    <scope>IDENTIFICATION</scope>
</reference>
<reference key="6">
    <citation type="journal article" date="1997" name="Electrophoresis">
        <title>Comparing the predicted and observed properties of proteins encoded in the genome of Escherichia coli K-12.</title>
        <authorList>
            <person name="Link A.J."/>
            <person name="Robison K."/>
            <person name="Church G.M."/>
        </authorList>
    </citation>
    <scope>PROTEIN SEQUENCE OF 1-12</scope>
    <source>
        <strain>K12 / EMG2</strain>
    </source>
</reference>
<reference key="7">
    <citation type="journal article" date="2003" name="Biochim. Biophys. Acta">
        <title>Characterization of short-chain dehydrogenase/reductase homologues of Escherichia coli (YdfG) and Saccharomyces cerevisiae (YMR226C).</title>
        <authorList>
            <person name="Fujisawa H."/>
            <person name="Nagata S."/>
            <person name="Misono H."/>
        </authorList>
    </citation>
    <scope>PROTEIN SEQUENCE OF 1-14</scope>
    <scope>FUNCTION AS A DEHYDROGENASE</scope>
    <scope>CATALYTIC ACTIVITY</scope>
    <scope>BIOPHYSICOCHEMICAL PROPERTIES</scope>
    <scope>SUBSTRATE SPECIFICITY</scope>
    <scope>SUBUNIT</scope>
</reference>
<reference key="8">
    <citation type="journal article" date="2010" name="J. Bacteriol.">
        <title>The Rut pathway for pyrimidine degradation: novel chemistry and toxicity problems.</title>
        <authorList>
            <person name="Kim K.S."/>
            <person name="Pelton J.G."/>
            <person name="Inwood W.B."/>
            <person name="Andersen U."/>
            <person name="Kustu S."/>
            <person name="Wemmer D.E."/>
        </authorList>
    </citation>
    <scope>FUNCTION IN PYRIMIDINE CATABOLISM</scope>
    <scope>DISRUPTION PHENOTYPE</scope>
</reference>
<accession>P39831</accession>
<accession>P77149</accession>
<accession>P78161</accession>
<accession>P78162</accession>
<proteinExistence type="evidence at protein level"/>
<sequence>MIVLVTGATAGFGECITRRFIQQGHKVIATGRRQERLQELKDELGDNLYIAQLDVRNRAAIEEMLASLPAEWCNIDILVNNAGLALGMEPAHKASVEDWETMIDTNNKGLVYMTRAVLPGMVERNHGHIINIGSTAGSWPYAGGNVYGATKAFVRQFSLNLRTDLHGTAVRVTDIEPGLVGGTEFSNVRFKGDDGKAEKTYQNTVALTPEDVSEAVWWVSTLPAHVNINTLEMMPVTQSYAGLNVHRQ</sequence>
<protein>
    <recommendedName>
        <fullName evidence="6">NADP-dependent 3-hydroxy acid dehydrogenase YdfG</fullName>
    </recommendedName>
    <alternativeName>
        <fullName evidence="6">L-allo-threonine dehydrogenase</fullName>
        <ecNumber evidence="4">1.1.1.381</ecNumber>
    </alternativeName>
    <alternativeName>
        <fullName evidence="7">Malonic semialdehyde reductase</fullName>
        <ecNumber evidence="9">1.1.1.298</ecNumber>
    </alternativeName>
</protein>
<keyword id="KW-0903">Direct protein sequencing</keyword>
<keyword id="KW-0521">NADP</keyword>
<keyword id="KW-0560">Oxidoreductase</keyword>
<keyword id="KW-1185">Reference proteome</keyword>
<gene>
    <name evidence="10" type="primary">ydfG</name>
    <name type="ordered locus">b1539</name>
    <name type="ordered locus">JW1532</name>
</gene>
<feature type="chain" id="PRO_0000054825" description="NADP-dependent 3-hydroxy acid dehydrogenase YdfG">
    <location>
        <begin position="1"/>
        <end position="248"/>
    </location>
</feature>
<feature type="active site" description="Proton acceptor" evidence="3">
    <location>
        <position position="147"/>
    </location>
</feature>
<feature type="binding site" evidence="2">
    <location>
        <begin position="7"/>
        <end position="12"/>
    </location>
    <ligand>
        <name>NADP(+)</name>
        <dbReference type="ChEBI" id="CHEBI:58349"/>
    </ligand>
</feature>
<feature type="binding site" evidence="2">
    <location>
        <begin position="32"/>
        <end position="33"/>
    </location>
    <ligand>
        <name>NADP(+)</name>
        <dbReference type="ChEBI" id="CHEBI:58349"/>
    </ligand>
</feature>
<feature type="binding site" evidence="2">
    <location>
        <begin position="54"/>
        <end position="55"/>
    </location>
    <ligand>
        <name>NADP(+)</name>
        <dbReference type="ChEBI" id="CHEBI:58349"/>
    </ligand>
</feature>
<feature type="binding site" evidence="2">
    <location>
        <position position="81"/>
    </location>
    <ligand>
        <name>NADP(+)</name>
        <dbReference type="ChEBI" id="CHEBI:58349"/>
    </ligand>
</feature>
<feature type="binding site" evidence="1">
    <location>
        <position position="134"/>
    </location>
    <ligand>
        <name>substrate</name>
    </ligand>
</feature>
<feature type="binding site" evidence="2">
    <location>
        <position position="147"/>
    </location>
    <ligand>
        <name>NADP(+)</name>
        <dbReference type="ChEBI" id="CHEBI:58349"/>
    </ligand>
</feature>
<feature type="binding site" evidence="2">
    <location>
        <position position="151"/>
    </location>
    <ligand>
        <name>NADP(+)</name>
        <dbReference type="ChEBI" id="CHEBI:58349"/>
    </ligand>
</feature>
<feature type="binding site" evidence="2">
    <location>
        <begin position="177"/>
        <end position="185"/>
    </location>
    <ligand>
        <name>NADP(+)</name>
        <dbReference type="ChEBI" id="CHEBI:58349"/>
    </ligand>
</feature>
<feature type="sequence conflict" description="In Ref. 4; X57947." evidence="8" ref="4">
    <original>G</original>
    <variation>T</variation>
    <location>
        <position position="182"/>
    </location>
</feature>
<name>YDFG_ECOLI</name>
<organism>
    <name type="scientific">Escherichia coli (strain K12)</name>
    <dbReference type="NCBI Taxonomy" id="83333"/>
    <lineage>
        <taxon>Bacteria</taxon>
        <taxon>Pseudomonadati</taxon>
        <taxon>Pseudomonadota</taxon>
        <taxon>Gammaproteobacteria</taxon>
        <taxon>Enterobacterales</taxon>
        <taxon>Enterobacteriaceae</taxon>
        <taxon>Escherichia</taxon>
    </lineage>
</organism>
<evidence type="ECO:0000250" key="1"/>
<evidence type="ECO:0000250" key="2">
    <source>
        <dbReference type="UniProtKB" id="Q05016"/>
    </source>
</evidence>
<evidence type="ECO:0000255" key="3">
    <source>
        <dbReference type="PROSITE-ProRule" id="PRU10001"/>
    </source>
</evidence>
<evidence type="ECO:0000269" key="4">
    <source>
    </source>
</evidence>
<evidence type="ECO:0000269" key="5">
    <source>
    </source>
</evidence>
<evidence type="ECO:0000303" key="6">
    <source>
    </source>
</evidence>
<evidence type="ECO:0000303" key="7">
    <source>
    </source>
</evidence>
<evidence type="ECO:0000305" key="8"/>
<evidence type="ECO:0000305" key="9">
    <source>
    </source>
</evidence>
<evidence type="ECO:0000312" key="10">
    <source>
        <dbReference type="EMBL" id="AAC74612.1"/>
    </source>
</evidence>